<sequence length="91" mass="10354">MPRSLKKGPFIDLHLLKKVEAAVEKNDKKPIKTWSRRSMIIPDMIGLTIAVHNGRQHVPVFVSDEMVGHKLGEFAPTRTYRGHVADKKAKR</sequence>
<name>RS19_PSEA6</name>
<protein>
    <recommendedName>
        <fullName evidence="1">Small ribosomal subunit protein uS19</fullName>
    </recommendedName>
    <alternativeName>
        <fullName evidence="2">30S ribosomal protein S19</fullName>
    </alternativeName>
</protein>
<proteinExistence type="inferred from homology"/>
<accession>Q15YN5</accession>
<keyword id="KW-0687">Ribonucleoprotein</keyword>
<keyword id="KW-0689">Ribosomal protein</keyword>
<keyword id="KW-0694">RNA-binding</keyword>
<keyword id="KW-0699">rRNA-binding</keyword>
<gene>
    <name evidence="1" type="primary">rpsS</name>
    <name type="ordered locus">Patl_0473</name>
</gene>
<organism>
    <name type="scientific">Pseudoalteromonas atlantica (strain T6c / ATCC BAA-1087)</name>
    <dbReference type="NCBI Taxonomy" id="3042615"/>
    <lineage>
        <taxon>Bacteria</taxon>
        <taxon>Pseudomonadati</taxon>
        <taxon>Pseudomonadota</taxon>
        <taxon>Gammaproteobacteria</taxon>
        <taxon>Alteromonadales</taxon>
        <taxon>Alteromonadaceae</taxon>
        <taxon>Paraglaciecola</taxon>
    </lineage>
</organism>
<dbReference type="EMBL" id="CP000388">
    <property type="protein sequence ID" value="ABG39003.1"/>
    <property type="molecule type" value="Genomic_DNA"/>
</dbReference>
<dbReference type="RefSeq" id="WP_011573392.1">
    <property type="nucleotide sequence ID" value="NC_008228.1"/>
</dbReference>
<dbReference type="SMR" id="Q15YN5"/>
<dbReference type="STRING" id="342610.Patl_0473"/>
<dbReference type="KEGG" id="pat:Patl_0473"/>
<dbReference type="eggNOG" id="COG0185">
    <property type="taxonomic scope" value="Bacteria"/>
</dbReference>
<dbReference type="HOGENOM" id="CLU_144911_0_1_6"/>
<dbReference type="OrthoDB" id="9797833at2"/>
<dbReference type="Proteomes" id="UP000001981">
    <property type="component" value="Chromosome"/>
</dbReference>
<dbReference type="GO" id="GO:0005737">
    <property type="term" value="C:cytoplasm"/>
    <property type="evidence" value="ECO:0007669"/>
    <property type="project" value="UniProtKB-ARBA"/>
</dbReference>
<dbReference type="GO" id="GO:0015935">
    <property type="term" value="C:small ribosomal subunit"/>
    <property type="evidence" value="ECO:0007669"/>
    <property type="project" value="InterPro"/>
</dbReference>
<dbReference type="GO" id="GO:0019843">
    <property type="term" value="F:rRNA binding"/>
    <property type="evidence" value="ECO:0007669"/>
    <property type="project" value="UniProtKB-UniRule"/>
</dbReference>
<dbReference type="GO" id="GO:0003735">
    <property type="term" value="F:structural constituent of ribosome"/>
    <property type="evidence" value="ECO:0007669"/>
    <property type="project" value="InterPro"/>
</dbReference>
<dbReference type="GO" id="GO:0000028">
    <property type="term" value="P:ribosomal small subunit assembly"/>
    <property type="evidence" value="ECO:0007669"/>
    <property type="project" value="TreeGrafter"/>
</dbReference>
<dbReference type="GO" id="GO:0006412">
    <property type="term" value="P:translation"/>
    <property type="evidence" value="ECO:0007669"/>
    <property type="project" value="UniProtKB-UniRule"/>
</dbReference>
<dbReference type="FunFam" id="3.30.860.10:FF:000001">
    <property type="entry name" value="30S ribosomal protein S19"/>
    <property type="match status" value="1"/>
</dbReference>
<dbReference type="Gene3D" id="3.30.860.10">
    <property type="entry name" value="30s Ribosomal Protein S19, Chain A"/>
    <property type="match status" value="1"/>
</dbReference>
<dbReference type="HAMAP" id="MF_00531">
    <property type="entry name" value="Ribosomal_uS19"/>
    <property type="match status" value="1"/>
</dbReference>
<dbReference type="InterPro" id="IPR002222">
    <property type="entry name" value="Ribosomal_uS19"/>
</dbReference>
<dbReference type="InterPro" id="IPR005732">
    <property type="entry name" value="Ribosomal_uS19_bac-type"/>
</dbReference>
<dbReference type="InterPro" id="IPR020934">
    <property type="entry name" value="Ribosomal_uS19_CS"/>
</dbReference>
<dbReference type="InterPro" id="IPR023575">
    <property type="entry name" value="Ribosomal_uS19_SF"/>
</dbReference>
<dbReference type="NCBIfam" id="TIGR01050">
    <property type="entry name" value="rpsS_bact"/>
    <property type="match status" value="1"/>
</dbReference>
<dbReference type="PANTHER" id="PTHR11880">
    <property type="entry name" value="RIBOSOMAL PROTEIN S19P FAMILY MEMBER"/>
    <property type="match status" value="1"/>
</dbReference>
<dbReference type="PANTHER" id="PTHR11880:SF8">
    <property type="entry name" value="SMALL RIBOSOMAL SUBUNIT PROTEIN US19M"/>
    <property type="match status" value="1"/>
</dbReference>
<dbReference type="Pfam" id="PF00203">
    <property type="entry name" value="Ribosomal_S19"/>
    <property type="match status" value="1"/>
</dbReference>
<dbReference type="PIRSF" id="PIRSF002144">
    <property type="entry name" value="Ribosomal_S19"/>
    <property type="match status" value="1"/>
</dbReference>
<dbReference type="PRINTS" id="PR00975">
    <property type="entry name" value="RIBOSOMALS19"/>
</dbReference>
<dbReference type="SUPFAM" id="SSF54570">
    <property type="entry name" value="Ribosomal protein S19"/>
    <property type="match status" value="1"/>
</dbReference>
<dbReference type="PROSITE" id="PS00323">
    <property type="entry name" value="RIBOSOMAL_S19"/>
    <property type="match status" value="1"/>
</dbReference>
<reference key="1">
    <citation type="submission" date="2006-06" db="EMBL/GenBank/DDBJ databases">
        <title>Complete sequence of Pseudoalteromonas atlantica T6c.</title>
        <authorList>
            <consortium name="US DOE Joint Genome Institute"/>
            <person name="Copeland A."/>
            <person name="Lucas S."/>
            <person name="Lapidus A."/>
            <person name="Barry K."/>
            <person name="Detter J.C."/>
            <person name="Glavina del Rio T."/>
            <person name="Hammon N."/>
            <person name="Israni S."/>
            <person name="Dalin E."/>
            <person name="Tice H."/>
            <person name="Pitluck S."/>
            <person name="Saunders E."/>
            <person name="Brettin T."/>
            <person name="Bruce D."/>
            <person name="Han C."/>
            <person name="Tapia R."/>
            <person name="Gilna P."/>
            <person name="Schmutz J."/>
            <person name="Larimer F."/>
            <person name="Land M."/>
            <person name="Hauser L."/>
            <person name="Kyrpides N."/>
            <person name="Kim E."/>
            <person name="Karls A.C."/>
            <person name="Bartlett D."/>
            <person name="Higgins B.P."/>
            <person name="Richardson P."/>
        </authorList>
    </citation>
    <scope>NUCLEOTIDE SEQUENCE [LARGE SCALE GENOMIC DNA]</scope>
    <source>
        <strain>T6c / ATCC BAA-1087</strain>
    </source>
</reference>
<feature type="chain" id="PRO_0000265400" description="Small ribosomal subunit protein uS19">
    <location>
        <begin position="1"/>
        <end position="91"/>
    </location>
</feature>
<evidence type="ECO:0000255" key="1">
    <source>
        <dbReference type="HAMAP-Rule" id="MF_00531"/>
    </source>
</evidence>
<evidence type="ECO:0000305" key="2"/>
<comment type="function">
    <text evidence="1">Protein S19 forms a complex with S13 that binds strongly to the 16S ribosomal RNA.</text>
</comment>
<comment type="similarity">
    <text evidence="1">Belongs to the universal ribosomal protein uS19 family.</text>
</comment>